<evidence type="ECO:0000255" key="1">
    <source>
        <dbReference type="HAMAP-Rule" id="MF_00634"/>
    </source>
</evidence>
<name>Y778_HAEDU</name>
<sequence>MKAVEFVENPYGIRLRIFLQPKASRDQIVGLHDNELKVAITAPPVDGAANAYLLKYLSKLFKVPKSSIVLEKGELQRHKQLFVPAPKLLPKEIEQWL</sequence>
<proteinExistence type="inferred from homology"/>
<reference key="1">
    <citation type="submission" date="2003-06" db="EMBL/GenBank/DDBJ databases">
        <title>The complete genome sequence of Haemophilus ducreyi.</title>
        <authorList>
            <person name="Munson R.S. Jr."/>
            <person name="Ray W.C."/>
            <person name="Mahairas G."/>
            <person name="Sabo P."/>
            <person name="Mungur R."/>
            <person name="Johnson L."/>
            <person name="Nguyen D."/>
            <person name="Wang J."/>
            <person name="Forst C."/>
            <person name="Hood L."/>
        </authorList>
    </citation>
    <scope>NUCLEOTIDE SEQUENCE [LARGE SCALE GENOMIC DNA]</scope>
    <source>
        <strain>35000HP / ATCC 700724</strain>
    </source>
</reference>
<organism>
    <name type="scientific">Haemophilus ducreyi (strain 35000HP / ATCC 700724)</name>
    <dbReference type="NCBI Taxonomy" id="233412"/>
    <lineage>
        <taxon>Bacteria</taxon>
        <taxon>Pseudomonadati</taxon>
        <taxon>Pseudomonadota</taxon>
        <taxon>Gammaproteobacteria</taxon>
        <taxon>Pasteurellales</taxon>
        <taxon>Pasteurellaceae</taxon>
        <taxon>Haemophilus</taxon>
    </lineage>
</organism>
<comment type="similarity">
    <text evidence="1">Belongs to the UPF0235 family.</text>
</comment>
<dbReference type="EMBL" id="AE017143">
    <property type="protein sequence ID" value="AAP95683.1"/>
    <property type="molecule type" value="Genomic_DNA"/>
</dbReference>
<dbReference type="RefSeq" id="WP_010944733.1">
    <property type="nucleotide sequence ID" value="NC_002940.2"/>
</dbReference>
<dbReference type="SMR" id="Q7VN15"/>
<dbReference type="STRING" id="233412.HD_0778"/>
<dbReference type="GeneID" id="60733127"/>
<dbReference type="KEGG" id="hdu:HD_0778"/>
<dbReference type="eggNOG" id="COG1872">
    <property type="taxonomic scope" value="Bacteria"/>
</dbReference>
<dbReference type="HOGENOM" id="CLU_130694_5_0_6"/>
<dbReference type="OrthoDB" id="9800587at2"/>
<dbReference type="Proteomes" id="UP000001022">
    <property type="component" value="Chromosome"/>
</dbReference>
<dbReference type="GO" id="GO:0005737">
    <property type="term" value="C:cytoplasm"/>
    <property type="evidence" value="ECO:0007669"/>
    <property type="project" value="TreeGrafter"/>
</dbReference>
<dbReference type="Gene3D" id="3.30.1200.10">
    <property type="entry name" value="YggU-like"/>
    <property type="match status" value="1"/>
</dbReference>
<dbReference type="HAMAP" id="MF_00634">
    <property type="entry name" value="UPF0235"/>
    <property type="match status" value="1"/>
</dbReference>
<dbReference type="InterPro" id="IPR003746">
    <property type="entry name" value="DUF167"/>
</dbReference>
<dbReference type="InterPro" id="IPR036591">
    <property type="entry name" value="YggU-like_sf"/>
</dbReference>
<dbReference type="NCBIfam" id="TIGR00251">
    <property type="entry name" value="DUF167 family protein"/>
    <property type="match status" value="1"/>
</dbReference>
<dbReference type="NCBIfam" id="NF003466">
    <property type="entry name" value="PRK05090.1"/>
    <property type="match status" value="1"/>
</dbReference>
<dbReference type="PANTHER" id="PTHR13420">
    <property type="entry name" value="UPF0235 PROTEIN C15ORF40"/>
    <property type="match status" value="1"/>
</dbReference>
<dbReference type="PANTHER" id="PTHR13420:SF7">
    <property type="entry name" value="UPF0235 PROTEIN C15ORF40"/>
    <property type="match status" value="1"/>
</dbReference>
<dbReference type="Pfam" id="PF02594">
    <property type="entry name" value="DUF167"/>
    <property type="match status" value="1"/>
</dbReference>
<dbReference type="SMART" id="SM01152">
    <property type="entry name" value="DUF167"/>
    <property type="match status" value="1"/>
</dbReference>
<dbReference type="SUPFAM" id="SSF69786">
    <property type="entry name" value="YggU-like"/>
    <property type="match status" value="1"/>
</dbReference>
<keyword id="KW-1185">Reference proteome</keyword>
<gene>
    <name type="ordered locus">HD_0778</name>
</gene>
<feature type="chain" id="PRO_0000139445" description="UPF0235 protein HD_0778">
    <location>
        <begin position="1"/>
        <end position="97"/>
    </location>
</feature>
<accession>Q7VN15</accession>
<protein>
    <recommendedName>
        <fullName evidence="1">UPF0235 protein HD_0778</fullName>
    </recommendedName>
</protein>